<evidence type="ECO:0000255" key="1">
    <source>
        <dbReference type="HAMAP-Rule" id="MF_00022"/>
    </source>
</evidence>
<reference key="1">
    <citation type="journal article" date="2008" name="PLoS ONE">
        <title>Comparative analysis of Acinetobacters: three genomes for three lifestyles.</title>
        <authorList>
            <person name="Vallenet D."/>
            <person name="Nordmann P."/>
            <person name="Barbe V."/>
            <person name="Poirel L."/>
            <person name="Mangenot S."/>
            <person name="Bataille E."/>
            <person name="Dossat C."/>
            <person name="Gas S."/>
            <person name="Kreimeyer A."/>
            <person name="Lenoble P."/>
            <person name="Oztas S."/>
            <person name="Poulain J."/>
            <person name="Segurens B."/>
            <person name="Robert C."/>
            <person name="Abergel C."/>
            <person name="Claverie J.-M."/>
            <person name="Raoult D."/>
            <person name="Medigue C."/>
            <person name="Weissenbach J."/>
            <person name="Cruveiller S."/>
        </authorList>
    </citation>
    <scope>NUCLEOTIDE SEQUENCE [LARGE SCALE GENOMIC DNA]</scope>
    <source>
        <strain>AYE</strain>
    </source>
</reference>
<keyword id="KW-0030">Aminoacyl-tRNA synthetase</keyword>
<keyword id="KW-0067">ATP-binding</keyword>
<keyword id="KW-0963">Cytoplasm</keyword>
<keyword id="KW-0436">Ligase</keyword>
<keyword id="KW-0547">Nucleotide-binding</keyword>
<keyword id="KW-0648">Protein biosynthesis</keyword>
<protein>
    <recommendedName>
        <fullName evidence="1">Glutamate--tRNA ligase</fullName>
        <ecNumber evidence="1">6.1.1.17</ecNumber>
    </recommendedName>
    <alternativeName>
        <fullName evidence="1">Glutamyl-tRNA synthetase</fullName>
        <shortName evidence="1">GluRS</shortName>
    </alternativeName>
</protein>
<proteinExistence type="inferred from homology"/>
<comment type="function">
    <text evidence="1">Catalyzes the attachment of glutamate to tRNA(Glu) in a two-step reaction: glutamate is first activated by ATP to form Glu-AMP and then transferred to the acceptor end of tRNA(Glu).</text>
</comment>
<comment type="catalytic activity">
    <reaction evidence="1">
        <text>tRNA(Glu) + L-glutamate + ATP = L-glutamyl-tRNA(Glu) + AMP + diphosphate</text>
        <dbReference type="Rhea" id="RHEA:23540"/>
        <dbReference type="Rhea" id="RHEA-COMP:9663"/>
        <dbReference type="Rhea" id="RHEA-COMP:9680"/>
        <dbReference type="ChEBI" id="CHEBI:29985"/>
        <dbReference type="ChEBI" id="CHEBI:30616"/>
        <dbReference type="ChEBI" id="CHEBI:33019"/>
        <dbReference type="ChEBI" id="CHEBI:78442"/>
        <dbReference type="ChEBI" id="CHEBI:78520"/>
        <dbReference type="ChEBI" id="CHEBI:456215"/>
        <dbReference type="EC" id="6.1.1.17"/>
    </reaction>
</comment>
<comment type="subunit">
    <text evidence="1">Monomer.</text>
</comment>
<comment type="subcellular location">
    <subcellularLocation>
        <location evidence="1">Cytoplasm</location>
    </subcellularLocation>
</comment>
<comment type="similarity">
    <text evidence="1">Belongs to the class-I aminoacyl-tRNA synthetase family. Glutamate--tRNA ligase type 1 subfamily.</text>
</comment>
<feature type="chain" id="PRO_0000367602" description="Glutamate--tRNA ligase">
    <location>
        <begin position="1"/>
        <end position="502"/>
    </location>
</feature>
<feature type="short sequence motif" description="'HIGH' region" evidence="1">
    <location>
        <begin position="9"/>
        <end position="19"/>
    </location>
</feature>
<feature type="short sequence motif" description="'KMSKS' region" evidence="1">
    <location>
        <begin position="250"/>
        <end position="254"/>
    </location>
</feature>
<feature type="binding site" evidence="1">
    <location>
        <position position="253"/>
    </location>
    <ligand>
        <name>ATP</name>
        <dbReference type="ChEBI" id="CHEBI:30616"/>
    </ligand>
</feature>
<accession>B0V8Q3</accession>
<organism>
    <name type="scientific">Acinetobacter baumannii (strain AYE)</name>
    <dbReference type="NCBI Taxonomy" id="509173"/>
    <lineage>
        <taxon>Bacteria</taxon>
        <taxon>Pseudomonadati</taxon>
        <taxon>Pseudomonadota</taxon>
        <taxon>Gammaproteobacteria</taxon>
        <taxon>Moraxellales</taxon>
        <taxon>Moraxellaceae</taxon>
        <taxon>Acinetobacter</taxon>
        <taxon>Acinetobacter calcoaceticus/baumannii complex</taxon>
    </lineage>
</organism>
<name>SYE_ACIBY</name>
<dbReference type="EC" id="6.1.1.17" evidence="1"/>
<dbReference type="EMBL" id="CU459141">
    <property type="protein sequence ID" value="CAM85257.1"/>
    <property type="molecule type" value="Genomic_DNA"/>
</dbReference>
<dbReference type="RefSeq" id="WP_000868422.1">
    <property type="nucleotide sequence ID" value="NZ_JBDGFB010000011.1"/>
</dbReference>
<dbReference type="SMR" id="B0V8Q3"/>
<dbReference type="EnsemblBacteria" id="CAM85257">
    <property type="protein sequence ID" value="CAM85257"/>
    <property type="gene ID" value="ABAYE0277"/>
</dbReference>
<dbReference type="GeneID" id="92895443"/>
<dbReference type="KEGG" id="aby:ABAYE0277"/>
<dbReference type="HOGENOM" id="CLU_015768_6_3_6"/>
<dbReference type="GO" id="GO:0005829">
    <property type="term" value="C:cytosol"/>
    <property type="evidence" value="ECO:0007669"/>
    <property type="project" value="TreeGrafter"/>
</dbReference>
<dbReference type="GO" id="GO:0005524">
    <property type="term" value="F:ATP binding"/>
    <property type="evidence" value="ECO:0007669"/>
    <property type="project" value="UniProtKB-UniRule"/>
</dbReference>
<dbReference type="GO" id="GO:0004818">
    <property type="term" value="F:glutamate-tRNA ligase activity"/>
    <property type="evidence" value="ECO:0007669"/>
    <property type="project" value="UniProtKB-UniRule"/>
</dbReference>
<dbReference type="GO" id="GO:0000049">
    <property type="term" value="F:tRNA binding"/>
    <property type="evidence" value="ECO:0007669"/>
    <property type="project" value="InterPro"/>
</dbReference>
<dbReference type="GO" id="GO:0008270">
    <property type="term" value="F:zinc ion binding"/>
    <property type="evidence" value="ECO:0007669"/>
    <property type="project" value="InterPro"/>
</dbReference>
<dbReference type="GO" id="GO:0006424">
    <property type="term" value="P:glutamyl-tRNA aminoacylation"/>
    <property type="evidence" value="ECO:0007669"/>
    <property type="project" value="UniProtKB-UniRule"/>
</dbReference>
<dbReference type="CDD" id="cd00808">
    <property type="entry name" value="GluRS_core"/>
    <property type="match status" value="1"/>
</dbReference>
<dbReference type="FunFam" id="3.40.50.620:FF:000045">
    <property type="entry name" value="Glutamate--tRNA ligase, mitochondrial"/>
    <property type="match status" value="1"/>
</dbReference>
<dbReference type="Gene3D" id="1.10.10.350">
    <property type="match status" value="1"/>
</dbReference>
<dbReference type="Gene3D" id="3.40.50.620">
    <property type="entry name" value="HUPs"/>
    <property type="match status" value="1"/>
</dbReference>
<dbReference type="HAMAP" id="MF_00022">
    <property type="entry name" value="Glu_tRNA_synth_type1"/>
    <property type="match status" value="1"/>
</dbReference>
<dbReference type="InterPro" id="IPR045462">
    <property type="entry name" value="aa-tRNA-synth_I_cd-bd"/>
</dbReference>
<dbReference type="InterPro" id="IPR020751">
    <property type="entry name" value="aa-tRNA-synth_I_codon-bd_sub2"/>
</dbReference>
<dbReference type="InterPro" id="IPR001412">
    <property type="entry name" value="aa-tRNA-synth_I_CS"/>
</dbReference>
<dbReference type="InterPro" id="IPR008925">
    <property type="entry name" value="aa_tRNA-synth_I_cd-bd_sf"/>
</dbReference>
<dbReference type="InterPro" id="IPR004527">
    <property type="entry name" value="Glu-tRNA-ligase_bac/mito"/>
</dbReference>
<dbReference type="InterPro" id="IPR000924">
    <property type="entry name" value="Glu/Gln-tRNA-synth"/>
</dbReference>
<dbReference type="InterPro" id="IPR020058">
    <property type="entry name" value="Glu/Gln-tRNA-synth_Ib_cat-dom"/>
</dbReference>
<dbReference type="InterPro" id="IPR049940">
    <property type="entry name" value="GluQ/Sye"/>
</dbReference>
<dbReference type="InterPro" id="IPR033910">
    <property type="entry name" value="GluRS_core"/>
</dbReference>
<dbReference type="InterPro" id="IPR014729">
    <property type="entry name" value="Rossmann-like_a/b/a_fold"/>
</dbReference>
<dbReference type="NCBIfam" id="TIGR00464">
    <property type="entry name" value="gltX_bact"/>
    <property type="match status" value="1"/>
</dbReference>
<dbReference type="PANTHER" id="PTHR43311">
    <property type="entry name" value="GLUTAMATE--TRNA LIGASE"/>
    <property type="match status" value="1"/>
</dbReference>
<dbReference type="PANTHER" id="PTHR43311:SF2">
    <property type="entry name" value="GLUTAMATE--TRNA LIGASE, MITOCHONDRIAL-RELATED"/>
    <property type="match status" value="1"/>
</dbReference>
<dbReference type="Pfam" id="PF19269">
    <property type="entry name" value="Anticodon_2"/>
    <property type="match status" value="1"/>
</dbReference>
<dbReference type="Pfam" id="PF00749">
    <property type="entry name" value="tRNA-synt_1c"/>
    <property type="match status" value="1"/>
</dbReference>
<dbReference type="PRINTS" id="PR00987">
    <property type="entry name" value="TRNASYNTHGLU"/>
</dbReference>
<dbReference type="SUPFAM" id="SSF48163">
    <property type="entry name" value="An anticodon-binding domain of class I aminoacyl-tRNA synthetases"/>
    <property type="match status" value="1"/>
</dbReference>
<dbReference type="SUPFAM" id="SSF52374">
    <property type="entry name" value="Nucleotidylyl transferase"/>
    <property type="match status" value="1"/>
</dbReference>
<dbReference type="PROSITE" id="PS00178">
    <property type="entry name" value="AA_TRNA_LIGASE_I"/>
    <property type="match status" value="1"/>
</dbReference>
<gene>
    <name evidence="1" type="primary">gltX</name>
    <name type="ordered locus">ABAYE0277</name>
</gene>
<sequence length="502" mass="57491">MKVRTRIAPSPTGFPHVGTAYIALFNMCFAKQHGGEFILRIEDTDQLRSTPESEKMILDSLRWLGLNWSEGPDVGGPHAPYRQSERMGIYKQYALELVEKGHAFYCFATAEELDQMRAEQQARGETPKYDGRGLKLSQEEVARRLEAGEPHVIRMKVPEEGVCKFNDLLRGEVEIPWAQVDMQVLLKTDGLPTYHLANVVDDHLMEITHVLRGEEWLPSAPKHQLLYQYFGWEMPTLCHMPLLRNPDKSKLSKRKNPTSINYYRDIGVLPEALLNYLGRMGWSMPDEREVFTLQDMMDNFDIQRVSLGGPIFDVEKLNWLNGQWIKGLTPGQLLDRLLTWKSDRSTLEDIAAAIQPRINLLSEAVNWAGFYFNHMPQITAEMFESKKLTQEQVRQSLQFAIWRLESQFTWNNDTVSQTLMDLANQMGIKLRDFMPTFFIAIAGSTSSTPVMQSMVTLGPDLTFARLRHALEIVGAPSKKEVKNWEKLNESLKLPKNEATSEA</sequence>